<evidence type="ECO:0000255" key="1">
    <source>
        <dbReference type="HAMAP-Rule" id="MF_01805"/>
    </source>
</evidence>
<gene>
    <name evidence="1" type="primary">scpA</name>
    <name type="ordered locus">EF_1538</name>
</gene>
<protein>
    <recommendedName>
        <fullName evidence="1">Segregation and condensation protein A</fullName>
    </recommendedName>
</protein>
<organism>
    <name type="scientific">Enterococcus faecalis (strain ATCC 700802 / V583)</name>
    <dbReference type="NCBI Taxonomy" id="226185"/>
    <lineage>
        <taxon>Bacteria</taxon>
        <taxon>Bacillati</taxon>
        <taxon>Bacillota</taxon>
        <taxon>Bacilli</taxon>
        <taxon>Lactobacillales</taxon>
        <taxon>Enterococcaceae</taxon>
        <taxon>Enterococcus</taxon>
    </lineage>
</organism>
<proteinExistence type="inferred from homology"/>
<comment type="function">
    <text evidence="1">Participates in chromosomal partition during cell division. May act via the formation of a condensin-like complex containing Smc and ScpB that pull DNA away from mid-cell into both cell halves.</text>
</comment>
<comment type="subunit">
    <text evidence="1">Component of a cohesin-like complex composed of ScpA, ScpB and the Smc homodimer, in which ScpA and ScpB bind to the head domain of Smc. The presence of the three proteins is required for the association of the complex with DNA.</text>
</comment>
<comment type="subcellular location">
    <subcellularLocation>
        <location evidence="1">Cytoplasm</location>
    </subcellularLocation>
    <text evidence="1">Associated with two foci at the outer edges of the nucleoid region in young cells, and at four foci within both cell halves in older cells.</text>
</comment>
<comment type="similarity">
    <text evidence="1">Belongs to the ScpA family.</text>
</comment>
<keyword id="KW-0131">Cell cycle</keyword>
<keyword id="KW-0132">Cell division</keyword>
<keyword id="KW-0159">Chromosome partition</keyword>
<keyword id="KW-0963">Cytoplasm</keyword>
<keyword id="KW-1185">Reference proteome</keyword>
<accession>Q834U4</accession>
<feature type="chain" id="PRO_0000211084" description="Segregation and condensation protein A">
    <location>
        <begin position="1"/>
        <end position="264"/>
    </location>
</feature>
<dbReference type="EMBL" id="AE016830">
    <property type="protein sequence ID" value="AAO81326.1"/>
    <property type="molecule type" value="Genomic_DNA"/>
</dbReference>
<dbReference type="RefSeq" id="NP_815256.1">
    <property type="nucleotide sequence ID" value="NC_004668.1"/>
</dbReference>
<dbReference type="RefSeq" id="WP_002382313.1">
    <property type="nucleotide sequence ID" value="NZ_KE136528.1"/>
</dbReference>
<dbReference type="SMR" id="Q834U4"/>
<dbReference type="STRING" id="226185.EF_1538"/>
<dbReference type="EnsemblBacteria" id="AAO81326">
    <property type="protein sequence ID" value="AAO81326"/>
    <property type="gene ID" value="EF_1538"/>
</dbReference>
<dbReference type="KEGG" id="efa:EF1538"/>
<dbReference type="PATRIC" id="fig|226185.9.peg.1443"/>
<dbReference type="eggNOG" id="COG1354">
    <property type="taxonomic scope" value="Bacteria"/>
</dbReference>
<dbReference type="HOGENOM" id="CLU_038686_3_1_9"/>
<dbReference type="Proteomes" id="UP000001415">
    <property type="component" value="Chromosome"/>
</dbReference>
<dbReference type="GO" id="GO:0005737">
    <property type="term" value="C:cytoplasm"/>
    <property type="evidence" value="ECO:0007669"/>
    <property type="project" value="UniProtKB-SubCell"/>
</dbReference>
<dbReference type="GO" id="GO:0051301">
    <property type="term" value="P:cell division"/>
    <property type="evidence" value="ECO:0007669"/>
    <property type="project" value="UniProtKB-KW"/>
</dbReference>
<dbReference type="GO" id="GO:0007059">
    <property type="term" value="P:chromosome segregation"/>
    <property type="evidence" value="ECO:0007669"/>
    <property type="project" value="UniProtKB-UniRule"/>
</dbReference>
<dbReference type="GO" id="GO:0006260">
    <property type="term" value="P:DNA replication"/>
    <property type="evidence" value="ECO:0007669"/>
    <property type="project" value="UniProtKB-UniRule"/>
</dbReference>
<dbReference type="Gene3D" id="6.10.250.2410">
    <property type="match status" value="1"/>
</dbReference>
<dbReference type="Gene3D" id="1.10.10.580">
    <property type="entry name" value="Structural maintenance of chromosome 1. Chain E"/>
    <property type="match status" value="1"/>
</dbReference>
<dbReference type="HAMAP" id="MF_01805">
    <property type="entry name" value="ScpA"/>
    <property type="match status" value="1"/>
</dbReference>
<dbReference type="InterPro" id="IPR003768">
    <property type="entry name" value="ScpA"/>
</dbReference>
<dbReference type="InterPro" id="IPR023093">
    <property type="entry name" value="ScpA-like_C"/>
</dbReference>
<dbReference type="NCBIfam" id="NF000995">
    <property type="entry name" value="PRK00104.1-4"/>
    <property type="match status" value="1"/>
</dbReference>
<dbReference type="PANTHER" id="PTHR33969">
    <property type="entry name" value="SEGREGATION AND CONDENSATION PROTEIN A"/>
    <property type="match status" value="1"/>
</dbReference>
<dbReference type="PANTHER" id="PTHR33969:SF2">
    <property type="entry name" value="SEGREGATION AND CONDENSATION PROTEIN A"/>
    <property type="match status" value="1"/>
</dbReference>
<dbReference type="Pfam" id="PF02616">
    <property type="entry name" value="SMC_ScpA"/>
    <property type="match status" value="1"/>
</dbReference>
<reference key="1">
    <citation type="journal article" date="2003" name="Science">
        <title>Role of mobile DNA in the evolution of vancomycin-resistant Enterococcus faecalis.</title>
        <authorList>
            <person name="Paulsen I.T."/>
            <person name="Banerjei L."/>
            <person name="Myers G.S.A."/>
            <person name="Nelson K.E."/>
            <person name="Seshadri R."/>
            <person name="Read T.D."/>
            <person name="Fouts D.E."/>
            <person name="Eisen J.A."/>
            <person name="Gill S.R."/>
            <person name="Heidelberg J.F."/>
            <person name="Tettelin H."/>
            <person name="Dodson R.J."/>
            <person name="Umayam L.A."/>
            <person name="Brinkac L.M."/>
            <person name="Beanan M.J."/>
            <person name="Daugherty S.C."/>
            <person name="DeBoy R.T."/>
            <person name="Durkin S.A."/>
            <person name="Kolonay J.F."/>
            <person name="Madupu R."/>
            <person name="Nelson W.C."/>
            <person name="Vamathevan J.J."/>
            <person name="Tran B."/>
            <person name="Upton J."/>
            <person name="Hansen T."/>
            <person name="Shetty J."/>
            <person name="Khouri H.M."/>
            <person name="Utterback T.R."/>
            <person name="Radune D."/>
            <person name="Ketchum K.A."/>
            <person name="Dougherty B.A."/>
            <person name="Fraser C.M."/>
        </authorList>
    </citation>
    <scope>NUCLEOTIDE SEQUENCE [LARGE SCALE GENOMIC DNA]</scope>
    <source>
        <strain>ATCC 700802 / V583</strain>
    </source>
</reference>
<name>SCPA_ENTFA</name>
<sequence length="264" mass="30778">MSFLQEINLKLDVFEGPLDLLLHLIQKLEIDIYDIPITAVTEQYMSYIHAMQTLELEVAGEYLVMAATLMAIKSQMLLPKQELEIIDDEDFFEEEDPREALVAQLLEYRKFKYAATVLHEKEEERKLYYTKEPMDMDDYKEEDTTLPPNQINTIDLFLAFHAMLEKKKNRQPVETTVASDDVSIEEKISAISERMRQVQKGKAVSFDSFFDSYSKQEIVTTFMALLELMKTGAIYAEQENNYSEILLFNTETQQEDTTEVEETQ</sequence>